<feature type="chain" id="PRO_1000084665" description="tRNA pseudouridine synthase B">
    <location>
        <begin position="1"/>
        <end position="313"/>
    </location>
</feature>
<feature type="active site" description="Nucleophile" evidence="1">
    <location>
        <position position="48"/>
    </location>
</feature>
<comment type="function">
    <text evidence="1">Responsible for synthesis of pseudouridine from uracil-55 in the psi GC loop of transfer RNAs.</text>
</comment>
<comment type="catalytic activity">
    <reaction evidence="1">
        <text>uridine(55) in tRNA = pseudouridine(55) in tRNA</text>
        <dbReference type="Rhea" id="RHEA:42532"/>
        <dbReference type="Rhea" id="RHEA-COMP:10101"/>
        <dbReference type="Rhea" id="RHEA-COMP:10102"/>
        <dbReference type="ChEBI" id="CHEBI:65314"/>
        <dbReference type="ChEBI" id="CHEBI:65315"/>
        <dbReference type="EC" id="5.4.99.25"/>
    </reaction>
</comment>
<comment type="similarity">
    <text evidence="1">Belongs to the pseudouridine synthase TruB family. Type 1 subfamily.</text>
</comment>
<proteinExistence type="inferred from homology"/>
<keyword id="KW-0413">Isomerase</keyword>
<keyword id="KW-1185">Reference proteome</keyword>
<keyword id="KW-0819">tRNA processing</keyword>
<accession>Q21H63</accession>
<reference key="1">
    <citation type="journal article" date="2008" name="PLoS Genet.">
        <title>Complete genome sequence of the complex carbohydrate-degrading marine bacterium, Saccharophagus degradans strain 2-40 T.</title>
        <authorList>
            <person name="Weiner R.M."/>
            <person name="Taylor L.E. II"/>
            <person name="Henrissat B."/>
            <person name="Hauser L."/>
            <person name="Land M."/>
            <person name="Coutinho P.M."/>
            <person name="Rancurel C."/>
            <person name="Saunders E.H."/>
            <person name="Longmire A.G."/>
            <person name="Zhang H."/>
            <person name="Bayer E.A."/>
            <person name="Gilbert H.J."/>
            <person name="Larimer F."/>
            <person name="Zhulin I.B."/>
            <person name="Ekborg N.A."/>
            <person name="Lamed R."/>
            <person name="Richardson P.M."/>
            <person name="Borovok I."/>
            <person name="Hutcheson S."/>
        </authorList>
    </citation>
    <scope>NUCLEOTIDE SEQUENCE [LARGE SCALE GENOMIC DNA]</scope>
    <source>
        <strain>2-40 / ATCC 43961 / DSM 17024</strain>
    </source>
</reference>
<protein>
    <recommendedName>
        <fullName evidence="1">tRNA pseudouridine synthase B</fullName>
        <ecNumber evidence="1">5.4.99.25</ecNumber>
    </recommendedName>
    <alternativeName>
        <fullName evidence="1">tRNA pseudouridine(55) synthase</fullName>
        <shortName evidence="1">Psi55 synthase</shortName>
    </alternativeName>
    <alternativeName>
        <fullName evidence="1">tRNA pseudouridylate synthase</fullName>
    </alternativeName>
    <alternativeName>
        <fullName evidence="1">tRNA-uridine isomerase</fullName>
    </alternativeName>
</protein>
<evidence type="ECO:0000255" key="1">
    <source>
        <dbReference type="HAMAP-Rule" id="MF_01080"/>
    </source>
</evidence>
<gene>
    <name evidence="1" type="primary">truB</name>
    <name type="ordered locus">Sde_2706</name>
</gene>
<dbReference type="EC" id="5.4.99.25" evidence="1"/>
<dbReference type="EMBL" id="CP000282">
    <property type="protein sequence ID" value="ABD81966.1"/>
    <property type="molecule type" value="Genomic_DNA"/>
</dbReference>
<dbReference type="RefSeq" id="WP_011469183.1">
    <property type="nucleotide sequence ID" value="NC_007912.1"/>
</dbReference>
<dbReference type="SMR" id="Q21H63"/>
<dbReference type="STRING" id="203122.Sde_2706"/>
<dbReference type="GeneID" id="98614363"/>
<dbReference type="KEGG" id="sde:Sde_2706"/>
<dbReference type="eggNOG" id="COG0130">
    <property type="taxonomic scope" value="Bacteria"/>
</dbReference>
<dbReference type="HOGENOM" id="CLU_032087_0_3_6"/>
<dbReference type="OrthoDB" id="9802309at2"/>
<dbReference type="Proteomes" id="UP000001947">
    <property type="component" value="Chromosome"/>
</dbReference>
<dbReference type="GO" id="GO:0003723">
    <property type="term" value="F:RNA binding"/>
    <property type="evidence" value="ECO:0007669"/>
    <property type="project" value="InterPro"/>
</dbReference>
<dbReference type="GO" id="GO:0160148">
    <property type="term" value="F:tRNA pseudouridine(55) synthase activity"/>
    <property type="evidence" value="ECO:0007669"/>
    <property type="project" value="UniProtKB-EC"/>
</dbReference>
<dbReference type="GO" id="GO:1990481">
    <property type="term" value="P:mRNA pseudouridine synthesis"/>
    <property type="evidence" value="ECO:0007669"/>
    <property type="project" value="TreeGrafter"/>
</dbReference>
<dbReference type="GO" id="GO:0031119">
    <property type="term" value="P:tRNA pseudouridine synthesis"/>
    <property type="evidence" value="ECO:0007669"/>
    <property type="project" value="UniProtKB-UniRule"/>
</dbReference>
<dbReference type="CDD" id="cd02573">
    <property type="entry name" value="PseudoU_synth_EcTruB"/>
    <property type="match status" value="1"/>
</dbReference>
<dbReference type="CDD" id="cd21152">
    <property type="entry name" value="PUA_TruB_bacterial"/>
    <property type="match status" value="1"/>
</dbReference>
<dbReference type="Gene3D" id="3.30.2350.10">
    <property type="entry name" value="Pseudouridine synthase"/>
    <property type="match status" value="1"/>
</dbReference>
<dbReference type="Gene3D" id="2.30.130.10">
    <property type="entry name" value="PUA domain"/>
    <property type="match status" value="1"/>
</dbReference>
<dbReference type="HAMAP" id="MF_01080">
    <property type="entry name" value="TruB_bact"/>
    <property type="match status" value="1"/>
</dbReference>
<dbReference type="InterPro" id="IPR020103">
    <property type="entry name" value="PsdUridine_synth_cat_dom_sf"/>
</dbReference>
<dbReference type="InterPro" id="IPR002501">
    <property type="entry name" value="PsdUridine_synth_N"/>
</dbReference>
<dbReference type="InterPro" id="IPR015947">
    <property type="entry name" value="PUA-like_sf"/>
</dbReference>
<dbReference type="InterPro" id="IPR036974">
    <property type="entry name" value="PUA_sf"/>
</dbReference>
<dbReference type="InterPro" id="IPR014780">
    <property type="entry name" value="tRNA_psdUridine_synth_TruB"/>
</dbReference>
<dbReference type="InterPro" id="IPR015240">
    <property type="entry name" value="tRNA_sdUridine_synth_fam1_C"/>
</dbReference>
<dbReference type="InterPro" id="IPR032819">
    <property type="entry name" value="TruB_C"/>
</dbReference>
<dbReference type="NCBIfam" id="TIGR00431">
    <property type="entry name" value="TruB"/>
    <property type="match status" value="1"/>
</dbReference>
<dbReference type="PANTHER" id="PTHR13767:SF2">
    <property type="entry name" value="PSEUDOURIDYLATE SYNTHASE TRUB1"/>
    <property type="match status" value="1"/>
</dbReference>
<dbReference type="PANTHER" id="PTHR13767">
    <property type="entry name" value="TRNA-PSEUDOURIDINE SYNTHASE"/>
    <property type="match status" value="1"/>
</dbReference>
<dbReference type="Pfam" id="PF09157">
    <property type="entry name" value="TruB-C_2"/>
    <property type="match status" value="1"/>
</dbReference>
<dbReference type="Pfam" id="PF16198">
    <property type="entry name" value="TruB_C_2"/>
    <property type="match status" value="1"/>
</dbReference>
<dbReference type="Pfam" id="PF01509">
    <property type="entry name" value="TruB_N"/>
    <property type="match status" value="1"/>
</dbReference>
<dbReference type="SUPFAM" id="SSF55120">
    <property type="entry name" value="Pseudouridine synthase"/>
    <property type="match status" value="1"/>
</dbReference>
<dbReference type="SUPFAM" id="SSF88697">
    <property type="entry name" value="PUA domain-like"/>
    <property type="match status" value="1"/>
</dbReference>
<sequence length="313" mass="34254">MGNRKRPGRPISGVIVIDKPAGDSSNGVLQRVKRLFFANKAGHTGSLDPLATGVLPVCFGDATKFSQFLLDSDKEYVSTFRFGEVTDTADSDGEVLESIDASKLTKADVLKAIKAYIGDIDQVPPMYSALKRNGQPLYKLARQGIEVEREPRPVTVYEFELLAFRPGAVAEADVRVFCSKGTYIRSLASDIGADLELGGHVAKLRRTQAGPFTIDQSITIEELEQERGERLAEVLDHHLLPTDIAVADFPSLELDDNSAFYFSRGQAVMDSRVYRLGDEGDKVRVFDSSGKFYGVAEITDEGTVAPKRLVSQS</sequence>
<organism>
    <name type="scientific">Saccharophagus degradans (strain 2-40 / ATCC 43961 / DSM 17024)</name>
    <dbReference type="NCBI Taxonomy" id="203122"/>
    <lineage>
        <taxon>Bacteria</taxon>
        <taxon>Pseudomonadati</taxon>
        <taxon>Pseudomonadota</taxon>
        <taxon>Gammaproteobacteria</taxon>
        <taxon>Cellvibrionales</taxon>
        <taxon>Cellvibrionaceae</taxon>
        <taxon>Saccharophagus</taxon>
    </lineage>
</organism>
<name>TRUB_SACD2</name>